<gene>
    <name evidence="1" type="primary">gcvH</name>
    <name type="ordered locus">VSAL_II0764</name>
</gene>
<reference key="1">
    <citation type="journal article" date="2008" name="BMC Genomics">
        <title>The genome sequence of the fish pathogen Aliivibrio salmonicida strain LFI1238 shows extensive evidence of gene decay.</title>
        <authorList>
            <person name="Hjerde E."/>
            <person name="Lorentzen M.S."/>
            <person name="Holden M.T."/>
            <person name="Seeger K."/>
            <person name="Paulsen S."/>
            <person name="Bason N."/>
            <person name="Churcher C."/>
            <person name="Harris D."/>
            <person name="Norbertczak H."/>
            <person name="Quail M.A."/>
            <person name="Sanders S."/>
            <person name="Thurston S."/>
            <person name="Parkhill J."/>
            <person name="Willassen N.P."/>
            <person name="Thomson N.R."/>
        </authorList>
    </citation>
    <scope>NUCLEOTIDE SEQUENCE [LARGE SCALE GENOMIC DNA]</scope>
    <source>
        <strain>LFI1238</strain>
    </source>
</reference>
<proteinExistence type="inferred from homology"/>
<sequence>MEKDLKFTASHEWVRENGDGTVTVGISNHAQGLLGDVVFVDLPDVDDEVTAGENFSLVESVKAASDIYAPISGVIVEINEELEDSPELVNEEPYEGGWIARIKLSDDGDLENLIPGDQYLESIEEE</sequence>
<organism>
    <name type="scientific">Aliivibrio salmonicida (strain LFI1238)</name>
    <name type="common">Vibrio salmonicida (strain LFI1238)</name>
    <dbReference type="NCBI Taxonomy" id="316275"/>
    <lineage>
        <taxon>Bacteria</taxon>
        <taxon>Pseudomonadati</taxon>
        <taxon>Pseudomonadota</taxon>
        <taxon>Gammaproteobacteria</taxon>
        <taxon>Vibrionales</taxon>
        <taxon>Vibrionaceae</taxon>
        <taxon>Aliivibrio</taxon>
    </lineage>
</organism>
<protein>
    <recommendedName>
        <fullName evidence="1">Glycine cleavage system H protein</fullName>
    </recommendedName>
</protein>
<accession>B6ES34</accession>
<evidence type="ECO:0000255" key="1">
    <source>
        <dbReference type="HAMAP-Rule" id="MF_00272"/>
    </source>
</evidence>
<evidence type="ECO:0000255" key="2">
    <source>
        <dbReference type="PROSITE-ProRule" id="PRU01066"/>
    </source>
</evidence>
<name>GCSH_ALISL</name>
<comment type="function">
    <text evidence="1">The glycine cleavage system catalyzes the degradation of glycine. The H protein shuttles the methylamine group of glycine from the P protein to the T protein.</text>
</comment>
<comment type="cofactor">
    <cofactor evidence="1">
        <name>(R)-lipoate</name>
        <dbReference type="ChEBI" id="CHEBI:83088"/>
    </cofactor>
    <text evidence="1">Binds 1 lipoyl cofactor covalently.</text>
</comment>
<comment type="subunit">
    <text evidence="1">The glycine cleavage system is composed of four proteins: P, T, L and H.</text>
</comment>
<comment type="similarity">
    <text evidence="1">Belongs to the GcvH family.</text>
</comment>
<keyword id="KW-0450">Lipoyl</keyword>
<feature type="chain" id="PRO_1000114494" description="Glycine cleavage system H protein">
    <location>
        <begin position="1"/>
        <end position="126"/>
    </location>
</feature>
<feature type="domain" description="Lipoyl-binding" evidence="2">
    <location>
        <begin position="21"/>
        <end position="103"/>
    </location>
</feature>
<feature type="modified residue" description="N6-lipoyllysine" evidence="1">
    <location>
        <position position="62"/>
    </location>
</feature>
<dbReference type="EMBL" id="FM178380">
    <property type="protein sequence ID" value="CAQ81518.1"/>
    <property type="molecule type" value="Genomic_DNA"/>
</dbReference>
<dbReference type="RefSeq" id="WP_012552058.1">
    <property type="nucleotide sequence ID" value="NC_011313.1"/>
</dbReference>
<dbReference type="SMR" id="B6ES34"/>
<dbReference type="KEGG" id="vsa:VSAL_II0764"/>
<dbReference type="eggNOG" id="COG0509">
    <property type="taxonomic scope" value="Bacteria"/>
</dbReference>
<dbReference type="HOGENOM" id="CLU_097408_2_0_6"/>
<dbReference type="Proteomes" id="UP000001730">
    <property type="component" value="Chromosome 2"/>
</dbReference>
<dbReference type="GO" id="GO:0005829">
    <property type="term" value="C:cytosol"/>
    <property type="evidence" value="ECO:0007669"/>
    <property type="project" value="TreeGrafter"/>
</dbReference>
<dbReference type="GO" id="GO:0005960">
    <property type="term" value="C:glycine cleavage complex"/>
    <property type="evidence" value="ECO:0007669"/>
    <property type="project" value="InterPro"/>
</dbReference>
<dbReference type="GO" id="GO:0019464">
    <property type="term" value="P:glycine decarboxylation via glycine cleavage system"/>
    <property type="evidence" value="ECO:0007669"/>
    <property type="project" value="UniProtKB-UniRule"/>
</dbReference>
<dbReference type="CDD" id="cd06848">
    <property type="entry name" value="GCS_H"/>
    <property type="match status" value="1"/>
</dbReference>
<dbReference type="Gene3D" id="2.40.50.100">
    <property type="match status" value="1"/>
</dbReference>
<dbReference type="HAMAP" id="MF_00272">
    <property type="entry name" value="GcvH"/>
    <property type="match status" value="1"/>
</dbReference>
<dbReference type="InterPro" id="IPR003016">
    <property type="entry name" value="2-oxoA_DH_lipoyl-BS"/>
</dbReference>
<dbReference type="InterPro" id="IPR000089">
    <property type="entry name" value="Biotin_lipoyl"/>
</dbReference>
<dbReference type="InterPro" id="IPR002930">
    <property type="entry name" value="GCV_H"/>
</dbReference>
<dbReference type="InterPro" id="IPR033753">
    <property type="entry name" value="GCV_H/Fam206"/>
</dbReference>
<dbReference type="InterPro" id="IPR017453">
    <property type="entry name" value="GCV_H_sub"/>
</dbReference>
<dbReference type="InterPro" id="IPR011053">
    <property type="entry name" value="Single_hybrid_motif"/>
</dbReference>
<dbReference type="NCBIfam" id="TIGR00527">
    <property type="entry name" value="gcvH"/>
    <property type="match status" value="1"/>
</dbReference>
<dbReference type="NCBIfam" id="NF002270">
    <property type="entry name" value="PRK01202.1"/>
    <property type="match status" value="1"/>
</dbReference>
<dbReference type="PANTHER" id="PTHR11715">
    <property type="entry name" value="GLYCINE CLEAVAGE SYSTEM H PROTEIN"/>
    <property type="match status" value="1"/>
</dbReference>
<dbReference type="PANTHER" id="PTHR11715:SF3">
    <property type="entry name" value="GLYCINE CLEAVAGE SYSTEM H PROTEIN-RELATED"/>
    <property type="match status" value="1"/>
</dbReference>
<dbReference type="Pfam" id="PF01597">
    <property type="entry name" value="GCV_H"/>
    <property type="match status" value="1"/>
</dbReference>
<dbReference type="SUPFAM" id="SSF51230">
    <property type="entry name" value="Single hybrid motif"/>
    <property type="match status" value="1"/>
</dbReference>
<dbReference type="PROSITE" id="PS50968">
    <property type="entry name" value="BIOTINYL_LIPOYL"/>
    <property type="match status" value="1"/>
</dbReference>
<dbReference type="PROSITE" id="PS00189">
    <property type="entry name" value="LIPOYL"/>
    <property type="match status" value="1"/>
</dbReference>